<evidence type="ECO:0000250" key="1">
    <source>
        <dbReference type="UniProtKB" id="Q93L51"/>
    </source>
</evidence>
<evidence type="ECO:0000255" key="2">
    <source>
        <dbReference type="HAMAP-Rule" id="MF_00845"/>
    </source>
</evidence>
<evidence type="ECO:0000269" key="3">
    <source>
    </source>
</evidence>
<evidence type="ECO:0000269" key="4">
    <source>
    </source>
</evidence>
<evidence type="ECO:0000303" key="5">
    <source>
    </source>
</evidence>
<evidence type="ECO:0000303" key="6">
    <source>
    </source>
</evidence>
<evidence type="ECO:0000305" key="7">
    <source>
    </source>
</evidence>
<evidence type="ECO:0000305" key="8">
    <source>
    </source>
</evidence>
<proteinExistence type="evidence at protein level"/>
<dbReference type="EC" id="1.14.13.231" evidence="2 8"/>
<dbReference type="EMBL" id="M37699">
    <property type="protein sequence ID" value="AAA27471.1"/>
    <property type="molecule type" value="Genomic_DNA"/>
</dbReference>
<dbReference type="PIR" id="A39191">
    <property type="entry name" value="A39191"/>
</dbReference>
<dbReference type="RefSeq" id="WP_063856436.1">
    <property type="nucleotide sequence ID" value="NG_048304.1"/>
</dbReference>
<dbReference type="SMR" id="Q01911"/>
<dbReference type="KEGG" id="ag:AAA27471"/>
<dbReference type="BioCyc" id="MetaCyc:MONOMER-19928"/>
<dbReference type="BRENDA" id="1.14.13.231">
    <property type="organism ID" value="755"/>
</dbReference>
<dbReference type="GO" id="GO:0005737">
    <property type="term" value="C:cytoplasm"/>
    <property type="evidence" value="ECO:0007669"/>
    <property type="project" value="UniProtKB-SubCell"/>
</dbReference>
<dbReference type="GO" id="GO:0071949">
    <property type="term" value="F:FAD binding"/>
    <property type="evidence" value="ECO:0007669"/>
    <property type="project" value="InterPro"/>
</dbReference>
<dbReference type="GO" id="GO:0004497">
    <property type="term" value="F:monooxygenase activity"/>
    <property type="evidence" value="ECO:0007669"/>
    <property type="project" value="UniProtKB-UniRule"/>
</dbReference>
<dbReference type="GO" id="GO:0046677">
    <property type="term" value="P:response to antibiotic"/>
    <property type="evidence" value="ECO:0007669"/>
    <property type="project" value="UniProtKB-KW"/>
</dbReference>
<dbReference type="Gene3D" id="3.50.50.60">
    <property type="entry name" value="FAD/NAD(P)-binding domain"/>
    <property type="match status" value="1"/>
</dbReference>
<dbReference type="HAMAP" id="MF_00845">
    <property type="entry name" value="TetX_monooxygenase"/>
    <property type="match status" value="1"/>
</dbReference>
<dbReference type="InterPro" id="IPR002938">
    <property type="entry name" value="FAD-bd"/>
</dbReference>
<dbReference type="InterPro" id="IPR036188">
    <property type="entry name" value="FAD/NAD-bd_sf"/>
</dbReference>
<dbReference type="InterPro" id="IPR043683">
    <property type="entry name" value="TetX_monooxygenase"/>
</dbReference>
<dbReference type="NCBIfam" id="NF033111">
    <property type="entry name" value="tet_monoox_X"/>
    <property type="match status" value="1"/>
</dbReference>
<dbReference type="PANTHER" id="PTHR46972:SF1">
    <property type="entry name" value="FAD DEPENDENT OXIDOREDUCTASE DOMAIN-CONTAINING PROTEIN"/>
    <property type="match status" value="1"/>
</dbReference>
<dbReference type="PANTHER" id="PTHR46972">
    <property type="entry name" value="MONOOXYGENASE ASQM-RELATED"/>
    <property type="match status" value="1"/>
</dbReference>
<dbReference type="Pfam" id="PF01494">
    <property type="entry name" value="FAD_binding_3"/>
    <property type="match status" value="1"/>
</dbReference>
<dbReference type="PRINTS" id="PR00420">
    <property type="entry name" value="RNGMNOXGNASE"/>
</dbReference>
<dbReference type="SUPFAM" id="SSF51905">
    <property type="entry name" value="FAD/NAD(P)-binding domain"/>
    <property type="match status" value="1"/>
</dbReference>
<sequence length="388" mass="43725">MTMRIDTDKQMNLLSDKNVAIIGGGPVGLTMAKLLQQNGIDVSVYERDNDREARIFGGTLDLHKGSGQEAMKKAGLLQTYYDLALPMGVNIADKKGNILSTKNVKPENRFDNPEINRNDLRAILLNSLENDTVIWDRKLVMLEPGKKKWTLTFENKPSETADLVILANGGMSKVRKFVTDTEVEETGTFNIQADIHQPEINCPGFFQLCNGNRLMASHQGNLLFANPNNNGALHFGISFKTPDEWKNQTQVDFQNRNSVVDFLLKEFSDWDERYKELIHTTLSFVGLATRIFPLEKPWKSKRPLPITMIGDAAHLMPPFAGQGVNSGLVDALILSDNLADGKFNSIEEAVKNYEQQMFMYGKEAQEESTQNEIEMFKPDFTFQQLLNV</sequence>
<name>TETX_BACFG</name>
<keyword id="KW-0046">Antibiotic resistance</keyword>
<keyword id="KW-0963">Cytoplasm</keyword>
<keyword id="KW-0274">FAD</keyword>
<keyword id="KW-0285">Flavoprotein</keyword>
<keyword id="KW-0503">Monooxygenase</keyword>
<keyword id="KW-0521">NADP</keyword>
<keyword id="KW-0547">Nucleotide-binding</keyword>
<keyword id="KW-0560">Oxidoreductase</keyword>
<keyword id="KW-0814">Transposable element</keyword>
<comment type="function">
    <text evidence="2">An FAD-requiring monooxygenase active on some tetracycline antibiotic derivatives, which leads to their inactivation. Hydroxylates carbon 11a of tetracycline and some analogs.</text>
</comment>
<comment type="function">
    <text evidence="3 7">Confers resistance to tetracycline via an oxidoreductase activity; NADPH is more active than NAD (Probable). Expression in E.coli leads to breakdown of tetracycline. Confers resistance to doxycycline, chlortetracycline, oxytetracycline and minocycline (PubMed:2644186).</text>
</comment>
<comment type="catalytic activity">
    <reaction evidence="2 8">
        <text>a tetracycline + NADPH + O2 + H(+) = an 11a-hydroxytetracycline + NADP(+) + H2O</text>
        <dbReference type="Rhea" id="RHEA:61444"/>
        <dbReference type="ChEBI" id="CHEBI:15377"/>
        <dbReference type="ChEBI" id="CHEBI:15378"/>
        <dbReference type="ChEBI" id="CHEBI:15379"/>
        <dbReference type="ChEBI" id="CHEBI:57783"/>
        <dbReference type="ChEBI" id="CHEBI:58349"/>
        <dbReference type="ChEBI" id="CHEBI:144644"/>
        <dbReference type="ChEBI" id="CHEBI:144645"/>
    </reaction>
</comment>
<comment type="catalytic activity">
    <reaction evidence="8">
        <text>tetracycline + NADPH + O2 + H(+) = 11a-hydroxytetracycline + NADP(+) + H2O</text>
        <dbReference type="Rhea" id="RHEA:50004"/>
        <dbReference type="ChEBI" id="CHEBI:15377"/>
        <dbReference type="ChEBI" id="CHEBI:15378"/>
        <dbReference type="ChEBI" id="CHEBI:15379"/>
        <dbReference type="ChEBI" id="CHEBI:57783"/>
        <dbReference type="ChEBI" id="CHEBI:58349"/>
        <dbReference type="ChEBI" id="CHEBI:77932"/>
        <dbReference type="ChEBI" id="CHEBI:132727"/>
        <dbReference type="EC" id="1.14.13.231"/>
    </reaction>
</comment>
<comment type="catalytic activity">
    <reaction evidence="8">
        <text>oxytetracycline + NADPH + O2 + H(+) = 11a-hydroxy-oxytetracycline + NADP(+) + H2O</text>
        <dbReference type="Rhea" id="RHEA:61452"/>
        <dbReference type="ChEBI" id="CHEBI:15377"/>
        <dbReference type="ChEBI" id="CHEBI:15378"/>
        <dbReference type="ChEBI" id="CHEBI:15379"/>
        <dbReference type="ChEBI" id="CHEBI:57783"/>
        <dbReference type="ChEBI" id="CHEBI:58349"/>
        <dbReference type="ChEBI" id="CHEBI:133011"/>
        <dbReference type="ChEBI" id="CHEBI:144646"/>
    </reaction>
</comment>
<comment type="cofactor">
    <cofactor evidence="2">
        <name>FAD</name>
        <dbReference type="ChEBI" id="CHEBI:57692"/>
    </cofactor>
</comment>
<comment type="subunit">
    <text evidence="2">Monomer.</text>
</comment>
<comment type="subcellular location">
    <subcellularLocation>
        <location evidence="2 7">Cytoplasm</location>
    </subcellularLocation>
</comment>
<comment type="domain">
    <text evidence="2">Consists of an N-terminal FAD-binding domain with a Rossman fold and a C-terminal substrate-binding domain.</text>
</comment>
<comment type="miscellaneous">
    <text evidence="4">Activity is not seen in B.fragilis, an anaerobic bacterium. Activity is seen when expressed in aerobically growing E.coli.</text>
</comment>
<comment type="miscellaneous">
    <text evidence="1">Tetracycline antibiotics bind to the ribosomal acceptor site (A-site), preventing binding of the aminoacyl-tRNA to the A-site. The hydrophilic side of tetracycline makes many hydrogen-bonding interactions with oxygen atoms of the ribosome's phosphate backbone.</text>
</comment>
<comment type="similarity">
    <text evidence="2">Belongs to the aromatic-ring hydroxylase family. TetX subfamily.</text>
</comment>
<feature type="chain" id="PRO_0000072488" description="Flavin-dependent monooxygenase">
    <location>
        <begin position="1"/>
        <end position="388"/>
    </location>
</feature>
<feature type="binding site" evidence="2">
    <location>
        <position position="54"/>
    </location>
    <ligand>
        <name>NADPH</name>
        <dbReference type="ChEBI" id="CHEBI:57783"/>
    </ligand>
</feature>
<feature type="binding site" evidence="2">
    <location>
        <position position="61"/>
    </location>
    <ligand>
        <name>FAD</name>
        <dbReference type="ChEBI" id="CHEBI:57692"/>
    </ligand>
</feature>
<feature type="binding site" evidence="2">
    <location>
        <position position="117"/>
    </location>
    <ligand>
        <name>FAD</name>
        <dbReference type="ChEBI" id="CHEBI:57692"/>
    </ligand>
</feature>
<feature type="binding site" evidence="2">
    <location>
        <position position="311"/>
    </location>
    <ligand>
        <name>FAD</name>
        <dbReference type="ChEBI" id="CHEBI:57692"/>
    </ligand>
</feature>
<gene>
    <name evidence="6" type="primary">tetX</name>
    <name evidence="6" type="synonym">Tcr*</name>
</gene>
<accession>Q01911</accession>
<protein>
    <recommendedName>
        <fullName evidence="2">Flavin-dependent monooxygenase</fullName>
    </recommendedName>
    <alternativeName>
        <fullName evidence="2">TetX monooxygenase</fullName>
        <shortName evidence="2">TetX</shortName>
        <ecNumber evidence="2 8">1.14.13.231</ecNumber>
    </alternativeName>
    <alternativeName>
        <fullName evidence="5">Tetracycline resistance protein from transposon Tn4351/Tn4400</fullName>
    </alternativeName>
</protein>
<organism>
    <name type="scientific">Bacteroides fragilis</name>
    <dbReference type="NCBI Taxonomy" id="817"/>
    <lineage>
        <taxon>Bacteria</taxon>
        <taxon>Pseudomonadati</taxon>
        <taxon>Bacteroidota</taxon>
        <taxon>Bacteroidia</taxon>
        <taxon>Bacteroidales</taxon>
        <taxon>Bacteroidaceae</taxon>
        <taxon>Bacteroides</taxon>
    </lineage>
</organism>
<reference key="1">
    <citation type="journal article" date="1991" name="J. Bacteriol.">
        <title>Evidence that a novel tetracycline resistance gene found on two Bacteroides transposons encodes an NADP-requiring oxidoreductase.</title>
        <authorList>
            <person name="Speer B.S."/>
            <person name="Bedzyk L."/>
            <person name="Salyers A.A."/>
        </authorList>
    </citation>
    <scope>NUCLEOTIDE SEQUENCE [GENOMIC DNA]</scope>
    <scope>FUNCTION</scope>
    <scope>SUBCELLULAR LOCATION</scope>
    <source>
        <transposon>Tn4351</transposon>
        <transposon>Tn4400</transposon>
    </source>
</reference>
<reference key="2">
    <citation type="journal article" date="1984" name="Plasmid">
        <title>Expression in Escherichia coli of cryptic tetracycline resistance genes from bacteroides R plasmids.</title>
        <authorList>
            <person name="Guiney D.G. Jr."/>
            <person name="Hasegawa P."/>
            <person name="Davis C.E."/>
        </authorList>
    </citation>
    <scope>IDENTIFICATION</scope>
    <source>
        <strain>479-l / 92</strain>
    </source>
</reference>
<reference key="3">
    <citation type="journal article" date="1989" name="J. Bacteriol.">
        <title>Novel aerobic tetracycline resistance gene that chemically modifies tetracycline.</title>
        <authorList>
            <person name="Speer B.S."/>
            <person name="Salyers A.A."/>
        </authorList>
    </citation>
    <scope>FUNCTION IN INACTIVATING TETRACYCLINE</scope>
    <source>
        <strain>479-l / 92</strain>
    </source>
</reference>